<name>YD366_YEAST</name>
<feature type="signal peptide" evidence="1">
    <location>
        <begin position="1"/>
        <end position="24"/>
    </location>
</feature>
<feature type="chain" id="PRO_0000253845" description="Uncharacterized protein YDR366C">
    <location>
        <begin position="25"/>
        <end position="132"/>
    </location>
</feature>
<feature type="transmembrane region" description="Helical" evidence="1">
    <location>
        <begin position="75"/>
        <end position="95"/>
    </location>
</feature>
<feature type="transmembrane region" description="Helical" evidence="1">
    <location>
        <begin position="112"/>
        <end position="132"/>
    </location>
</feature>
<evidence type="ECO:0000255" key="1"/>
<evidence type="ECO:0000305" key="2"/>
<gene>
    <name type="ordered locus">YDR366C</name>
</gene>
<proteinExistence type="inferred from homology"/>
<comment type="subcellular location">
    <subcellularLocation>
        <location evidence="2">Membrane</location>
        <topology evidence="2">Multi-pass membrane protein</topology>
    </subcellularLocation>
</comment>
<organism>
    <name type="scientific">Saccharomyces cerevisiae (strain ATCC 204508 / S288c)</name>
    <name type="common">Baker's yeast</name>
    <dbReference type="NCBI Taxonomy" id="559292"/>
    <lineage>
        <taxon>Eukaryota</taxon>
        <taxon>Fungi</taxon>
        <taxon>Dikarya</taxon>
        <taxon>Ascomycota</taxon>
        <taxon>Saccharomycotina</taxon>
        <taxon>Saccharomycetes</taxon>
        <taxon>Saccharomycetales</taxon>
        <taxon>Saccharomycetaceae</taxon>
        <taxon>Saccharomyces</taxon>
    </lineage>
</organism>
<keyword id="KW-0472">Membrane</keyword>
<keyword id="KW-1185">Reference proteome</keyword>
<keyword id="KW-0732">Signal</keyword>
<keyword id="KW-0812">Transmembrane</keyword>
<keyword id="KW-1133">Transmembrane helix</keyword>
<dbReference type="EMBL" id="U28373">
    <property type="protein sequence ID" value="AAB64822.1"/>
    <property type="molecule type" value="Genomic_DNA"/>
</dbReference>
<dbReference type="EMBL" id="BK006938">
    <property type="protein sequence ID" value="DAA12207.1"/>
    <property type="molecule type" value="Genomic_DNA"/>
</dbReference>
<dbReference type="PIR" id="S69746">
    <property type="entry name" value="S69746"/>
</dbReference>
<dbReference type="SMR" id="P87287"/>
<dbReference type="BioGRID" id="32425">
    <property type="interactions" value="33"/>
</dbReference>
<dbReference type="DIP" id="DIP-5351N"/>
<dbReference type="FunCoup" id="P87287">
    <property type="interactions" value="2"/>
</dbReference>
<dbReference type="STRING" id="4932.YDR366C"/>
<dbReference type="PaxDb" id="4932-YDR366C"/>
<dbReference type="EnsemblFungi" id="YDR366C_mRNA">
    <property type="protein sequence ID" value="YDR366C"/>
    <property type="gene ID" value="YDR366C"/>
</dbReference>
<dbReference type="KEGG" id="sce:YDR366C"/>
<dbReference type="AGR" id="SGD:S000002774"/>
<dbReference type="SGD" id="S000002774">
    <property type="gene designation" value="YDR366C"/>
</dbReference>
<dbReference type="VEuPathDB" id="FungiDB:YDR366C"/>
<dbReference type="HOGENOM" id="CLU_1918717_0_0_1"/>
<dbReference type="InParanoid" id="P87287"/>
<dbReference type="BioCyc" id="YEAST:G3O-29916-MONOMER"/>
<dbReference type="BioGRID-ORCS" id="851972">
    <property type="hits" value="0 hits in 10 CRISPR screens"/>
</dbReference>
<dbReference type="PRO" id="PR:P87287"/>
<dbReference type="Proteomes" id="UP000002311">
    <property type="component" value="Chromosome IV"/>
</dbReference>
<dbReference type="RNAct" id="P87287">
    <property type="molecule type" value="protein"/>
</dbReference>
<dbReference type="GO" id="GO:0016020">
    <property type="term" value="C:membrane"/>
    <property type="evidence" value="ECO:0007669"/>
    <property type="project" value="UniProtKB-SubCell"/>
</dbReference>
<protein>
    <recommendedName>
        <fullName>Uncharacterized protein YDR366C</fullName>
    </recommendedName>
</protein>
<sequence length="132" mass="15540">MVTIGSSSLVLFLFFVVFVQITYTALHRFSRLLCTFFSKIIEEGCVWYNKKHRFPNLYKYIYVYVYILHICFEKYVNVEIIVGIPLLIKAIILGIQNILEVLLKDLGIHKRESAILHNSINIIIIILYVYIH</sequence>
<accession>P87287</accession>
<accession>D6VSZ7</accession>
<reference key="1">
    <citation type="journal article" date="1997" name="Nature">
        <title>The nucleotide sequence of Saccharomyces cerevisiae chromosome IV.</title>
        <authorList>
            <person name="Jacq C."/>
            <person name="Alt-Moerbe J."/>
            <person name="Andre B."/>
            <person name="Arnold W."/>
            <person name="Bahr A."/>
            <person name="Ballesta J.P.G."/>
            <person name="Bargues M."/>
            <person name="Baron L."/>
            <person name="Becker A."/>
            <person name="Biteau N."/>
            <person name="Bloecker H."/>
            <person name="Blugeon C."/>
            <person name="Boskovic J."/>
            <person name="Brandt P."/>
            <person name="Brueckner M."/>
            <person name="Buitrago M.J."/>
            <person name="Coster F."/>
            <person name="Delaveau T."/>
            <person name="del Rey F."/>
            <person name="Dujon B."/>
            <person name="Eide L.G."/>
            <person name="Garcia-Cantalejo J.M."/>
            <person name="Goffeau A."/>
            <person name="Gomez-Peris A."/>
            <person name="Granotier C."/>
            <person name="Hanemann V."/>
            <person name="Hankeln T."/>
            <person name="Hoheisel J.D."/>
            <person name="Jaeger W."/>
            <person name="Jimenez A."/>
            <person name="Jonniaux J.-L."/>
            <person name="Kraemer C."/>
            <person name="Kuester H."/>
            <person name="Laamanen P."/>
            <person name="Legros Y."/>
            <person name="Louis E.J."/>
            <person name="Moeller-Rieker S."/>
            <person name="Monnet A."/>
            <person name="Moro M."/>
            <person name="Mueller-Auer S."/>
            <person name="Nussbaumer B."/>
            <person name="Paricio N."/>
            <person name="Paulin L."/>
            <person name="Perea J."/>
            <person name="Perez-Alonso M."/>
            <person name="Perez-Ortin J.E."/>
            <person name="Pohl T.M."/>
            <person name="Prydz H."/>
            <person name="Purnelle B."/>
            <person name="Rasmussen S.W."/>
            <person name="Remacha M.A."/>
            <person name="Revuelta J.L."/>
            <person name="Rieger M."/>
            <person name="Salom D."/>
            <person name="Saluz H.P."/>
            <person name="Saiz J.E."/>
            <person name="Saren A.-M."/>
            <person name="Schaefer M."/>
            <person name="Scharfe M."/>
            <person name="Schmidt E.R."/>
            <person name="Schneider C."/>
            <person name="Scholler P."/>
            <person name="Schwarz S."/>
            <person name="Soler-Mira A."/>
            <person name="Urrestarazu L.A."/>
            <person name="Verhasselt P."/>
            <person name="Vissers S."/>
            <person name="Voet M."/>
            <person name="Volckaert G."/>
            <person name="Wagner G."/>
            <person name="Wambutt R."/>
            <person name="Wedler E."/>
            <person name="Wedler H."/>
            <person name="Woelfl S."/>
            <person name="Harris D.E."/>
            <person name="Bowman S."/>
            <person name="Brown D."/>
            <person name="Churcher C.M."/>
            <person name="Connor R."/>
            <person name="Dedman K."/>
            <person name="Gentles S."/>
            <person name="Hamlin N."/>
            <person name="Hunt S."/>
            <person name="Jones L."/>
            <person name="McDonald S."/>
            <person name="Murphy L.D."/>
            <person name="Niblett D."/>
            <person name="Odell C."/>
            <person name="Oliver K."/>
            <person name="Rajandream M.A."/>
            <person name="Richards C."/>
            <person name="Shore L."/>
            <person name="Walsh S.V."/>
            <person name="Barrell B.G."/>
            <person name="Dietrich F.S."/>
            <person name="Mulligan J.T."/>
            <person name="Allen E."/>
            <person name="Araujo R."/>
            <person name="Aviles E."/>
            <person name="Berno A."/>
            <person name="Carpenter J."/>
            <person name="Chen E."/>
            <person name="Cherry J.M."/>
            <person name="Chung E."/>
            <person name="Duncan M."/>
            <person name="Hunicke-Smith S."/>
            <person name="Hyman R.W."/>
            <person name="Komp C."/>
            <person name="Lashkari D."/>
            <person name="Lew H."/>
            <person name="Lin D."/>
            <person name="Mosedale D."/>
            <person name="Nakahara K."/>
            <person name="Namath A."/>
            <person name="Oefner P."/>
            <person name="Oh C."/>
            <person name="Petel F.X."/>
            <person name="Roberts D."/>
            <person name="Schramm S."/>
            <person name="Schroeder M."/>
            <person name="Shogren T."/>
            <person name="Shroff N."/>
            <person name="Winant A."/>
            <person name="Yelton M.A."/>
            <person name="Botstein D."/>
            <person name="Davis R.W."/>
            <person name="Johnston M."/>
            <person name="Andrews S."/>
            <person name="Brinkman R."/>
            <person name="Cooper J."/>
            <person name="Ding H."/>
            <person name="Du Z."/>
            <person name="Favello A."/>
            <person name="Fulton L."/>
            <person name="Gattung S."/>
            <person name="Greco T."/>
            <person name="Hallsworth K."/>
            <person name="Hawkins J."/>
            <person name="Hillier L.W."/>
            <person name="Jier M."/>
            <person name="Johnson D."/>
            <person name="Johnston L."/>
            <person name="Kirsten J."/>
            <person name="Kucaba T."/>
            <person name="Langston Y."/>
            <person name="Latreille P."/>
            <person name="Le T."/>
            <person name="Mardis E."/>
            <person name="Menezes S."/>
            <person name="Miller N."/>
            <person name="Nhan M."/>
            <person name="Pauley A."/>
            <person name="Peluso D."/>
            <person name="Rifkin L."/>
            <person name="Riles L."/>
            <person name="Taich A."/>
            <person name="Trevaskis E."/>
            <person name="Vignati D."/>
            <person name="Wilcox L."/>
            <person name="Wohldman P."/>
            <person name="Vaudin M."/>
            <person name="Wilson R."/>
            <person name="Waterston R."/>
            <person name="Albermann K."/>
            <person name="Hani J."/>
            <person name="Heumann K."/>
            <person name="Kleine K."/>
            <person name="Mewes H.-W."/>
            <person name="Zollner A."/>
            <person name="Zaccaria P."/>
        </authorList>
    </citation>
    <scope>NUCLEOTIDE SEQUENCE [LARGE SCALE GENOMIC DNA]</scope>
    <source>
        <strain>ATCC 204508 / S288c</strain>
    </source>
</reference>
<reference key="2">
    <citation type="journal article" date="2014" name="G3 (Bethesda)">
        <title>The reference genome sequence of Saccharomyces cerevisiae: Then and now.</title>
        <authorList>
            <person name="Engel S.R."/>
            <person name="Dietrich F.S."/>
            <person name="Fisk D.G."/>
            <person name="Binkley G."/>
            <person name="Balakrishnan R."/>
            <person name="Costanzo M.C."/>
            <person name="Dwight S.S."/>
            <person name="Hitz B.C."/>
            <person name="Karra K."/>
            <person name="Nash R.S."/>
            <person name="Weng S."/>
            <person name="Wong E.D."/>
            <person name="Lloyd P."/>
            <person name="Skrzypek M.S."/>
            <person name="Miyasato S.R."/>
            <person name="Simison M."/>
            <person name="Cherry J.M."/>
        </authorList>
    </citation>
    <scope>GENOME REANNOTATION</scope>
    <source>
        <strain>ATCC 204508 / S288c</strain>
    </source>
</reference>